<feature type="chain" id="PRO_0000054626" description="11-beta-hydroxysteroid dehydrogenase type 2">
    <location>
        <begin position="1"/>
        <end position="404"/>
    </location>
</feature>
<feature type="region of interest" description="Disordered" evidence="5">
    <location>
        <begin position="383"/>
        <end position="404"/>
    </location>
</feature>
<feature type="active site" description="Proton acceptor" evidence="4">
    <location>
        <position position="232"/>
    </location>
</feature>
<feature type="binding site" evidence="1">
    <location>
        <begin position="82"/>
        <end position="111"/>
    </location>
    <ligand>
        <name>NAD(+)</name>
        <dbReference type="ChEBI" id="CHEBI:57540"/>
    </ligand>
</feature>
<feature type="binding site" evidence="1">
    <location>
        <position position="219"/>
    </location>
    <ligand>
        <name>substrate</name>
    </ligand>
</feature>
<gene>
    <name type="primary">HSD11B2</name>
</gene>
<dbReference type="EC" id="1.1.1.-" evidence="6 8 15"/>
<dbReference type="EMBL" id="AF074706">
    <property type="protein sequence ID" value="AAC26137.1"/>
    <property type="molecule type" value="mRNA"/>
</dbReference>
<dbReference type="RefSeq" id="NP_777067.1">
    <property type="nucleotide sequence ID" value="NM_174642.2"/>
</dbReference>
<dbReference type="SMR" id="O77667"/>
<dbReference type="FunCoup" id="O77667">
    <property type="interactions" value="25"/>
</dbReference>
<dbReference type="STRING" id="9913.ENSBTAP00000007470"/>
<dbReference type="PaxDb" id="9913-ENSBTAP00000007470"/>
<dbReference type="GeneID" id="282434"/>
<dbReference type="KEGG" id="bta:282434"/>
<dbReference type="CTD" id="3291"/>
<dbReference type="eggNOG" id="KOG1610">
    <property type="taxonomic scope" value="Eukaryota"/>
</dbReference>
<dbReference type="InParanoid" id="O77667"/>
<dbReference type="OrthoDB" id="9876299at2759"/>
<dbReference type="Proteomes" id="UP000009136">
    <property type="component" value="Unplaced"/>
</dbReference>
<dbReference type="GO" id="GO:0005783">
    <property type="term" value="C:endoplasmic reticulum"/>
    <property type="evidence" value="ECO:0007669"/>
    <property type="project" value="UniProtKB-SubCell"/>
</dbReference>
<dbReference type="GO" id="GO:0043231">
    <property type="term" value="C:intracellular membrane-bounded organelle"/>
    <property type="evidence" value="ECO:0000318"/>
    <property type="project" value="GO_Central"/>
</dbReference>
<dbReference type="GO" id="GO:0070523">
    <property type="term" value="F:11-beta-hydroxysteroid dehydrogenase (NAD+) activity"/>
    <property type="evidence" value="ECO:0000318"/>
    <property type="project" value="GO_Central"/>
</dbReference>
<dbReference type="GO" id="GO:0008211">
    <property type="term" value="P:glucocorticoid metabolic process"/>
    <property type="evidence" value="ECO:0000318"/>
    <property type="project" value="GO_Central"/>
</dbReference>
<dbReference type="CDD" id="cd09805">
    <property type="entry name" value="type2_17beta_HSD-like_SDR_c"/>
    <property type="match status" value="1"/>
</dbReference>
<dbReference type="FunFam" id="3.40.50.720:FF:000074">
    <property type="entry name" value="Retinol dehydrogenase type 1"/>
    <property type="match status" value="1"/>
</dbReference>
<dbReference type="Gene3D" id="3.40.50.720">
    <property type="entry name" value="NAD(P)-binding Rossmann-like Domain"/>
    <property type="match status" value="1"/>
</dbReference>
<dbReference type="InterPro" id="IPR036291">
    <property type="entry name" value="NAD(P)-bd_dom_sf"/>
</dbReference>
<dbReference type="InterPro" id="IPR020904">
    <property type="entry name" value="Sc_DH/Rdtase_CS"/>
</dbReference>
<dbReference type="InterPro" id="IPR002347">
    <property type="entry name" value="SDR_fam"/>
</dbReference>
<dbReference type="PANTHER" id="PTHR43313:SF2">
    <property type="entry name" value="11-BETA-HYDROXYSTEROID DEHYDROGENASE TYPE 2"/>
    <property type="match status" value="1"/>
</dbReference>
<dbReference type="PANTHER" id="PTHR43313">
    <property type="entry name" value="SHORT-CHAIN DEHYDROGENASE/REDUCTASE FAMILY 9C"/>
    <property type="match status" value="1"/>
</dbReference>
<dbReference type="Pfam" id="PF00106">
    <property type="entry name" value="adh_short"/>
    <property type="match status" value="1"/>
</dbReference>
<dbReference type="PRINTS" id="PR00081">
    <property type="entry name" value="GDHRDH"/>
</dbReference>
<dbReference type="SUPFAM" id="SSF51735">
    <property type="entry name" value="NAD(P)-binding Rossmann-fold domains"/>
    <property type="match status" value="1"/>
</dbReference>
<dbReference type="PROSITE" id="PS00061">
    <property type="entry name" value="ADH_SHORT"/>
    <property type="match status" value="1"/>
</dbReference>
<reference key="1">
    <citation type="journal article" date="2000" name="J. Steroid Biochem. Mol. Biol.">
        <title>Cloning and expression of the bovine 11beta-hydroxysteroid dehydrogenase type-2.</title>
        <authorList>
            <person name="Romero D.G."/>
            <person name="Zhou M.-Y."/>
            <person name="Gomez-Sanchez C.E."/>
        </authorList>
    </citation>
    <scope>NUCLEOTIDE SEQUENCE [MRNA]</scope>
    <scope>FUNCTION</scope>
    <scope>CATALYTIC ACTIVITY</scope>
    <scope>BIOPHYSICOCHEMICAL PROPERTIES</scope>
    <scope>ACTIVITY REGULATION</scope>
    <scope>TISSUE SPECIFICITY</scope>
    <source>
        <tissue>Kidney</tissue>
    </source>
</reference>
<reference key="2">
    <citation type="journal article" date="2003" name="J. Endocrinol.">
        <title>Expression of 11beta-hydroxysteroid dehydrogenases in bovine follicle and corpus luteum.</title>
        <authorList>
            <person name="Tetsuka M."/>
            <person name="Yamamoto S."/>
            <person name="Hayashida N."/>
            <person name="Hayashi K.G."/>
            <person name="Hayashi M."/>
            <person name="Acosta T.J."/>
            <person name="Miyamoto A."/>
        </authorList>
    </citation>
    <scope>TISSUE SPECIFICITY</scope>
</reference>
<reference key="3">
    <citation type="journal article" date="2007" name="J. Endocrinol.">
        <title>11beta-Hydroxysteroid dehydrogenase expression and activities in bovine granulosa cells and corpora lutea implicate corticosteroids in bovine ovarian physiology.</title>
        <authorList>
            <person name="Thurston L.M."/>
            <person name="Abayasekara D.R."/>
            <person name="Michael A.E."/>
        </authorList>
    </citation>
    <scope>FUNCTION</scope>
    <scope>CATALYTIC ACTIVITY</scope>
</reference>
<reference key="4">
    <citation type="journal article" date="2016" name="Reproduction">
        <title>Glucocorticoid metabolism in the bovine cumulus-oocyte complex matured in vitro.</title>
        <authorList>
            <person name="Tetsuka M."/>
            <person name="Takagi R."/>
            <person name="Ambo N."/>
            <person name="Myat T.S."/>
            <person name="Zempo Y."/>
            <person name="Onuma A."/>
        </authorList>
    </citation>
    <scope>FUNCTION</scope>
    <scope>CATALYTIC ACTIVITY</scope>
    <scope>TISSUE SPECIFICITY</scope>
</reference>
<keyword id="KW-0256">Endoplasmic reticulum</keyword>
<keyword id="KW-0443">Lipid metabolism</keyword>
<keyword id="KW-0492">Microsome</keyword>
<keyword id="KW-0520">NAD</keyword>
<keyword id="KW-0560">Oxidoreductase</keyword>
<keyword id="KW-1185">Reference proteome</keyword>
<keyword id="KW-0753">Steroid metabolism</keyword>
<name>DHI2_BOVIN</name>
<organism>
    <name type="scientific">Bos taurus</name>
    <name type="common">Bovine</name>
    <dbReference type="NCBI Taxonomy" id="9913"/>
    <lineage>
        <taxon>Eukaryota</taxon>
        <taxon>Metazoa</taxon>
        <taxon>Chordata</taxon>
        <taxon>Craniata</taxon>
        <taxon>Vertebrata</taxon>
        <taxon>Euteleostomi</taxon>
        <taxon>Mammalia</taxon>
        <taxon>Eutheria</taxon>
        <taxon>Laurasiatheria</taxon>
        <taxon>Artiodactyla</taxon>
        <taxon>Ruminantia</taxon>
        <taxon>Pecora</taxon>
        <taxon>Bovidae</taxon>
        <taxon>Bovinae</taxon>
        <taxon>Bos</taxon>
    </lineage>
</organism>
<accession>O77667</accession>
<evidence type="ECO:0000250" key="1"/>
<evidence type="ECO:0000250" key="2">
    <source>
        <dbReference type="UniProtKB" id="P51661"/>
    </source>
</evidence>
<evidence type="ECO:0000250" key="3">
    <source>
        <dbReference type="UniProtKB" id="P80365"/>
    </source>
</evidence>
<evidence type="ECO:0000255" key="4">
    <source>
        <dbReference type="PROSITE-ProRule" id="PRU10001"/>
    </source>
</evidence>
<evidence type="ECO:0000256" key="5">
    <source>
        <dbReference type="SAM" id="MobiDB-lite"/>
    </source>
</evidence>
<evidence type="ECO:0000269" key="6">
    <source>
    </source>
</evidence>
<evidence type="ECO:0000269" key="7">
    <source>
    </source>
</evidence>
<evidence type="ECO:0000269" key="8">
    <source>
    </source>
</evidence>
<evidence type="ECO:0000269" key="9">
    <source>
    </source>
</evidence>
<evidence type="ECO:0000303" key="10">
    <source>
    </source>
</evidence>
<evidence type="ECO:0000303" key="11">
    <source>
    </source>
</evidence>
<evidence type="ECO:0000303" key="12">
    <source>
    </source>
</evidence>
<evidence type="ECO:0000305" key="13"/>
<evidence type="ECO:0000305" key="14">
    <source>
    </source>
</evidence>
<evidence type="ECO:0000305" key="15">
    <source>
    </source>
</evidence>
<sequence>MESWPWPSGGAWLLVPARALLQLLRADLRLGRPLLAALALLAALDWLCQRLLPPLAALAVLAATGWIVLSRLARPQRLPVATRAVLITGCDSGFGNATAKKLDTMGFTVLATVLDLNSPGALELRACCSSRLKLLQMDLTKPGDISRVLEFTKVHTPSTGLWGLVNNAGQNIFVADAELCPVATFRTCMEVNFFGALEMTKGLLPLLRRSSGRIVTVSSPAGDMPFPCLAAYGTSKAALALLMGNFSCELLPWGVKVSIIQPACFKTESVKDVHQWEERKQQLLATLPQELLQAYGEDYIEHLNGQFLHSLSQALPDLSPVVDAITDALLAAQPLRRYYPGHGLGLIYFIHYYLPEGLRQRFLQSFFISPYVPRALQAGQPGLTSARDIAQDQGPRPDPSPTAQ</sequence>
<proteinExistence type="evidence at protein level"/>
<protein>
    <recommendedName>
        <fullName evidence="10">11-beta-hydroxysteroid dehydrogenase type 2</fullName>
        <shortName>11-DH2</shortName>
        <shortName evidence="10 11">11-beta-HSD2</shortName>
        <ecNumber evidence="6 8 15">1.1.1.-</ecNumber>
    </recommendedName>
    <alternativeName>
        <fullName>Corticosteroid 11-beta-dehydrogenase isozyme 2</fullName>
    </alternativeName>
    <alternativeName>
        <fullName>NAD-dependent 11-beta-hydroxysteroid dehydrogenase</fullName>
    </alternativeName>
</protein>
<comment type="function">
    <text evidence="2 3 6 8 9 11 12">Catalyzes the conversion of biologically active 11beta-hydroxyglucocorticoids (11beta-hydroxysteroid) such as cortisol, to inactive 11-ketoglucocorticoids (11-oxosteroid) such as cortisone, in the presence of NAD(+) (PubMed:10822012, PubMed:17470521, PubMed:26519454). Functions as a dehydrogenase (oxidase), thereby decreasing the concentration of active glucocorticoids, thus protecting the nonselective mineralocorticoid receptor from occupation by glucocorticoids (PubMed:10822012). Affinity towards corticosterone is higher than cortisol or dexamethasone (PubMed:10822012). Plays an important role in maintaining glucocorticoids balance during preimplantation and protects the fetus from excessive maternal corticosterone exposure (By similarity). Catalyzes the oxidation of 11beta-hydroxytestosterone (11beta,17beta-dihydroxyandrost-4-ene-3-one) to 11-ketotestosterone (17beta-hydroxyandrost-4-ene-3,11-dione), a major bioactive androgen. Catalyzes the conversion of 11beta-hydroxyandrostenedione (11beta-hydroxyandrost-4-ene-3,17-dione) to 11-ketoandrostenedione (androst-4-ene-3,11,17-trione), which can be further metabolized to 11-ketotestosterone. Converts 7-beta-25-dihydroxycholesterol to 7-oxo-25-hydroxycholesterol in vitro. 7-beta-25-dihydroxycholesterol (not 7-oxo-25-hydroxycholesterol) acts as ligand for the G-protein-coupled receptor (GPCR) Epstein-Barr virus-induced gene 2 (EBI2) and may thereby regulate immune cell migration (By similarity). May protect ovulating oocytes and fertilizing spermatozoa from the adverse effects of cortisol (PubMed:17470521, PubMed:26519454).</text>
</comment>
<comment type="catalytic activity">
    <reaction evidence="6 8 15">
        <text>an 11beta-hydroxysteroid + NAD(+) = an 11-oxosteroid + NADH + H(+)</text>
        <dbReference type="Rhea" id="RHEA:53116"/>
        <dbReference type="ChEBI" id="CHEBI:15378"/>
        <dbReference type="ChEBI" id="CHEBI:35346"/>
        <dbReference type="ChEBI" id="CHEBI:47787"/>
        <dbReference type="ChEBI" id="CHEBI:57540"/>
        <dbReference type="ChEBI" id="CHEBI:57945"/>
    </reaction>
    <physiologicalReaction direction="left-to-right" evidence="6 14 15">
        <dbReference type="Rhea" id="RHEA:53117"/>
    </physiologicalReaction>
</comment>
<comment type="catalytic activity">
    <reaction evidence="6">
        <text>corticosterone + NAD(+) = 11-dehydrocorticosterone + NADH + H(+)</text>
        <dbReference type="Rhea" id="RHEA:42204"/>
        <dbReference type="ChEBI" id="CHEBI:15378"/>
        <dbReference type="ChEBI" id="CHEBI:16827"/>
        <dbReference type="ChEBI" id="CHEBI:57540"/>
        <dbReference type="ChEBI" id="CHEBI:57945"/>
        <dbReference type="ChEBI" id="CHEBI:78600"/>
    </reaction>
    <physiologicalReaction direction="left-to-right" evidence="6">
        <dbReference type="Rhea" id="RHEA:42205"/>
    </physiologicalReaction>
</comment>
<comment type="catalytic activity">
    <reaction evidence="6 8 15">
        <text>cortisol + NAD(+) = cortisone + NADH + H(+)</text>
        <dbReference type="Rhea" id="RHEA:50208"/>
        <dbReference type="ChEBI" id="CHEBI:15378"/>
        <dbReference type="ChEBI" id="CHEBI:16962"/>
        <dbReference type="ChEBI" id="CHEBI:17650"/>
        <dbReference type="ChEBI" id="CHEBI:57540"/>
        <dbReference type="ChEBI" id="CHEBI:57945"/>
    </reaction>
    <physiologicalReaction direction="left-to-right" evidence="6 14 15">
        <dbReference type="Rhea" id="RHEA:50209"/>
    </physiologicalReaction>
</comment>
<comment type="catalytic activity">
    <reaction evidence="3">
        <text>11beta,17beta-dihydroxyandrost-4-ene-3-one + NAD(+) = 17beta-hydroxyandrost-4-ene-3,11-dione + NADH + H(+)</text>
        <dbReference type="Rhea" id="RHEA:69368"/>
        <dbReference type="ChEBI" id="CHEBI:15378"/>
        <dbReference type="ChEBI" id="CHEBI:34133"/>
        <dbReference type="ChEBI" id="CHEBI:57540"/>
        <dbReference type="ChEBI" id="CHEBI:57945"/>
        <dbReference type="ChEBI" id="CHEBI:81481"/>
    </reaction>
    <physiologicalReaction direction="left-to-right" evidence="3">
        <dbReference type="Rhea" id="RHEA:69369"/>
    </physiologicalReaction>
</comment>
<comment type="catalytic activity">
    <reaction evidence="3">
        <text>11beta-hydroxyandrost-4-ene-3,17-dione + NAD(+) = androst-4-ene-3,11,17-trione + NADH + H(+)</text>
        <dbReference type="Rhea" id="RHEA:69408"/>
        <dbReference type="ChEBI" id="CHEBI:2495"/>
        <dbReference type="ChEBI" id="CHEBI:15378"/>
        <dbReference type="ChEBI" id="CHEBI:27967"/>
        <dbReference type="ChEBI" id="CHEBI:57540"/>
        <dbReference type="ChEBI" id="CHEBI:57945"/>
    </reaction>
    <physiologicalReaction direction="left-to-right" evidence="3">
        <dbReference type="Rhea" id="RHEA:69409"/>
    </physiologicalReaction>
</comment>
<comment type="activity regulation">
    <text evidence="6">Inhibited by glycyrrhetinic acid, carbenoloxone, 11-alpha-OH-progesterone and 11-beta-OH-progesterone.</text>
</comment>
<comment type="biophysicochemical properties">
    <kinetics>
        <KM evidence="6">45.6 nM for cortisol</KM>
        <KM evidence="6">5.5 nM for corticosterone</KM>
        <KM evidence="6">71.8 nM for dexamethasone</KM>
        <Vmax evidence="6">106.3 pmol/min/mg enzyme with cortisol as substrate</Vmax>
        <Vmax evidence="6">31.6 pmol/min/mg enzyme using corticosterone as substrate</Vmax>
        <Vmax evidence="6">36.0 pmol/min/mg enzyme using dexamethasone as substrate</Vmax>
    </kinetics>
</comment>
<comment type="pathway">
    <text evidence="13">Steroid metabolism.</text>
</comment>
<comment type="subunit">
    <text evidence="3">Interacts with ligand-free cytoplasmic NR3C2.</text>
</comment>
<comment type="subcellular location">
    <subcellularLocation>
        <location evidence="3">Microsome</location>
    </subcellularLocation>
    <subcellularLocation>
        <location evidence="3">Endoplasmic reticulum</location>
    </subcellularLocation>
</comment>
<comment type="tissue specificity">
    <text evidence="6 7 9">Highly expressed in kidney, adrenal and colon; detected at lower levels on lung, liver, and spleen (PubMed:10822012, PubMed:12773125). Expressed in oocytes (PubMed:26519454). Expressed in uterine tissues and in corpora lutea (PubMed:12773125).</text>
</comment>
<comment type="similarity">
    <text evidence="13">Belongs to the short-chain dehydrogenases/reductases (SDR) family.</text>
</comment>